<reference key="1">
    <citation type="journal article" date="2009" name="Appl. Environ. Microbiol.">
        <title>Novel features of the polysaccharide-digesting gliding bacterium Flavobacterium johnsoniae as revealed by genome sequence analysis.</title>
        <authorList>
            <person name="McBride M.J."/>
            <person name="Xie G."/>
            <person name="Martens E.C."/>
            <person name="Lapidus A."/>
            <person name="Henrissat B."/>
            <person name="Rhodes R.G."/>
            <person name="Goltsman E."/>
            <person name="Wang W."/>
            <person name="Xu J."/>
            <person name="Hunnicutt D.W."/>
            <person name="Staroscik A.M."/>
            <person name="Hoover T.R."/>
            <person name="Cheng Y.Q."/>
            <person name="Stein J.L."/>
        </authorList>
    </citation>
    <scope>NUCLEOTIDE SEQUENCE [LARGE SCALE GENOMIC DNA]</scope>
    <source>
        <strain>ATCC 17061 / DSM 2064 / JCM 8514 / BCRC 14874 / CCUG 350202 / NBRC 14942 / NCIMB 11054 / UW101</strain>
    </source>
</reference>
<sequence>MQRDEQIFDLIQEEKDRQIHGLELIASENFVSDEVMEAAGSVLTNKYAEGYPGKRYYGGCEVVDVIEQIAIDRAKELFGAEYANVQPHSGSQANTAVYHACLNPGDTILGFDLSHGGHLTHGSPVNFSGRLYRPVFYGVDAETGRLDYDKIQEIATKEQPKLIIAGASAYSRDMDFARFRQIADSVGAILFADISHPAGLIAKGLLSDPIPHCHIVSTTTHKTLRGPRGGLILMGKDFPNPQGLTTPKGEIRMMSSLLDLAVFPGNQGGPLMHIIAAKAVAFGEALKDEFFTYAMQLQKNANAMADAFVKRGYNIISGGTDNHMMLIDLRNKNISGKEAENALVKAEITVNKNMVPFDDKSPFITSGIRVGTAAITTRGLVEKDMETIVALIDKVLTNHTNEDVIEEVAEEVNELMSERPIFAY</sequence>
<keyword id="KW-0028">Amino-acid biosynthesis</keyword>
<keyword id="KW-0963">Cytoplasm</keyword>
<keyword id="KW-0554">One-carbon metabolism</keyword>
<keyword id="KW-0663">Pyridoxal phosphate</keyword>
<keyword id="KW-0808">Transferase</keyword>
<comment type="function">
    <text evidence="1">Catalyzes the reversible interconversion of serine and glycine with tetrahydrofolate (THF) serving as the one-carbon carrier. This reaction serves as the major source of one-carbon groups required for the biosynthesis of purines, thymidylate, methionine, and other important biomolecules. Also exhibits THF-independent aldolase activity toward beta-hydroxyamino acids, producing glycine and aldehydes, via a retro-aldol mechanism.</text>
</comment>
<comment type="catalytic activity">
    <reaction evidence="1">
        <text>(6R)-5,10-methylene-5,6,7,8-tetrahydrofolate + glycine + H2O = (6S)-5,6,7,8-tetrahydrofolate + L-serine</text>
        <dbReference type="Rhea" id="RHEA:15481"/>
        <dbReference type="ChEBI" id="CHEBI:15377"/>
        <dbReference type="ChEBI" id="CHEBI:15636"/>
        <dbReference type="ChEBI" id="CHEBI:33384"/>
        <dbReference type="ChEBI" id="CHEBI:57305"/>
        <dbReference type="ChEBI" id="CHEBI:57453"/>
        <dbReference type="EC" id="2.1.2.1"/>
    </reaction>
</comment>
<comment type="cofactor">
    <cofactor evidence="1">
        <name>pyridoxal 5'-phosphate</name>
        <dbReference type="ChEBI" id="CHEBI:597326"/>
    </cofactor>
</comment>
<comment type="pathway">
    <text evidence="1">One-carbon metabolism; tetrahydrofolate interconversion.</text>
</comment>
<comment type="pathway">
    <text evidence="1">Amino-acid biosynthesis; glycine biosynthesis; glycine from L-serine: step 1/1.</text>
</comment>
<comment type="subunit">
    <text evidence="1">Homodimer.</text>
</comment>
<comment type="subcellular location">
    <subcellularLocation>
        <location evidence="1">Cytoplasm</location>
    </subcellularLocation>
</comment>
<comment type="similarity">
    <text evidence="1">Belongs to the SHMT family.</text>
</comment>
<evidence type="ECO:0000255" key="1">
    <source>
        <dbReference type="HAMAP-Rule" id="MF_00051"/>
    </source>
</evidence>
<feature type="chain" id="PRO_1000074896" description="Serine hydroxymethyltransferase">
    <location>
        <begin position="1"/>
        <end position="424"/>
    </location>
</feature>
<feature type="binding site" evidence="1">
    <location>
        <position position="113"/>
    </location>
    <ligand>
        <name>(6S)-5,6,7,8-tetrahydrofolate</name>
        <dbReference type="ChEBI" id="CHEBI:57453"/>
    </ligand>
</feature>
<feature type="binding site" evidence="1">
    <location>
        <begin position="117"/>
        <end position="119"/>
    </location>
    <ligand>
        <name>(6S)-5,6,7,8-tetrahydrofolate</name>
        <dbReference type="ChEBI" id="CHEBI:57453"/>
    </ligand>
</feature>
<feature type="binding site" evidence="1">
    <location>
        <begin position="361"/>
        <end position="363"/>
    </location>
    <ligand>
        <name>(6S)-5,6,7,8-tetrahydrofolate</name>
        <dbReference type="ChEBI" id="CHEBI:57453"/>
    </ligand>
</feature>
<feature type="site" description="Plays an important role in substrate specificity" evidence="1">
    <location>
        <position position="221"/>
    </location>
</feature>
<feature type="modified residue" description="N6-(pyridoxal phosphate)lysine" evidence="1">
    <location>
        <position position="222"/>
    </location>
</feature>
<proteinExistence type="inferred from homology"/>
<protein>
    <recommendedName>
        <fullName evidence="1">Serine hydroxymethyltransferase</fullName>
        <shortName evidence="1">SHMT</shortName>
        <shortName evidence="1">Serine methylase</shortName>
        <ecNumber evidence="1">2.1.2.1</ecNumber>
    </recommendedName>
</protein>
<gene>
    <name evidence="1" type="primary">glyA</name>
    <name type="ordered locus">Fjoh_3410</name>
</gene>
<dbReference type="EC" id="2.1.2.1" evidence="1"/>
<dbReference type="EMBL" id="CP000685">
    <property type="protein sequence ID" value="ABQ06424.1"/>
    <property type="molecule type" value="Genomic_DNA"/>
</dbReference>
<dbReference type="RefSeq" id="WP_012025393.1">
    <property type="nucleotide sequence ID" value="NC_009441.1"/>
</dbReference>
<dbReference type="SMR" id="A5FEF4"/>
<dbReference type="STRING" id="376686.Fjoh_3410"/>
<dbReference type="KEGG" id="fjo:Fjoh_3410"/>
<dbReference type="eggNOG" id="COG0112">
    <property type="taxonomic scope" value="Bacteria"/>
</dbReference>
<dbReference type="HOGENOM" id="CLU_022477_2_1_10"/>
<dbReference type="OrthoDB" id="9803846at2"/>
<dbReference type="UniPathway" id="UPA00193"/>
<dbReference type="UniPathway" id="UPA00288">
    <property type="reaction ID" value="UER01023"/>
</dbReference>
<dbReference type="Proteomes" id="UP000006694">
    <property type="component" value="Chromosome"/>
</dbReference>
<dbReference type="GO" id="GO:0005829">
    <property type="term" value="C:cytosol"/>
    <property type="evidence" value="ECO:0007669"/>
    <property type="project" value="TreeGrafter"/>
</dbReference>
<dbReference type="GO" id="GO:0004372">
    <property type="term" value="F:glycine hydroxymethyltransferase activity"/>
    <property type="evidence" value="ECO:0007669"/>
    <property type="project" value="UniProtKB-UniRule"/>
</dbReference>
<dbReference type="GO" id="GO:0030170">
    <property type="term" value="F:pyridoxal phosphate binding"/>
    <property type="evidence" value="ECO:0007669"/>
    <property type="project" value="UniProtKB-UniRule"/>
</dbReference>
<dbReference type="GO" id="GO:0019264">
    <property type="term" value="P:glycine biosynthetic process from serine"/>
    <property type="evidence" value="ECO:0007669"/>
    <property type="project" value="UniProtKB-UniRule"/>
</dbReference>
<dbReference type="GO" id="GO:0035999">
    <property type="term" value="P:tetrahydrofolate interconversion"/>
    <property type="evidence" value="ECO:0007669"/>
    <property type="project" value="UniProtKB-UniRule"/>
</dbReference>
<dbReference type="CDD" id="cd00378">
    <property type="entry name" value="SHMT"/>
    <property type="match status" value="1"/>
</dbReference>
<dbReference type="FunFam" id="3.40.640.10:FF:000001">
    <property type="entry name" value="Serine hydroxymethyltransferase"/>
    <property type="match status" value="1"/>
</dbReference>
<dbReference type="Gene3D" id="3.90.1150.10">
    <property type="entry name" value="Aspartate Aminotransferase, domain 1"/>
    <property type="match status" value="1"/>
</dbReference>
<dbReference type="Gene3D" id="3.40.640.10">
    <property type="entry name" value="Type I PLP-dependent aspartate aminotransferase-like (Major domain)"/>
    <property type="match status" value="1"/>
</dbReference>
<dbReference type="HAMAP" id="MF_00051">
    <property type="entry name" value="SHMT"/>
    <property type="match status" value="1"/>
</dbReference>
<dbReference type="InterPro" id="IPR015424">
    <property type="entry name" value="PyrdxlP-dep_Trfase"/>
</dbReference>
<dbReference type="InterPro" id="IPR015421">
    <property type="entry name" value="PyrdxlP-dep_Trfase_major"/>
</dbReference>
<dbReference type="InterPro" id="IPR015422">
    <property type="entry name" value="PyrdxlP-dep_Trfase_small"/>
</dbReference>
<dbReference type="InterPro" id="IPR001085">
    <property type="entry name" value="Ser_HO-MeTrfase"/>
</dbReference>
<dbReference type="InterPro" id="IPR049943">
    <property type="entry name" value="Ser_HO-MeTrfase-like"/>
</dbReference>
<dbReference type="InterPro" id="IPR019798">
    <property type="entry name" value="Ser_HO-MeTrfase_PLP_BS"/>
</dbReference>
<dbReference type="InterPro" id="IPR039429">
    <property type="entry name" value="SHMT-like_dom"/>
</dbReference>
<dbReference type="NCBIfam" id="NF000586">
    <property type="entry name" value="PRK00011.1"/>
    <property type="match status" value="1"/>
</dbReference>
<dbReference type="PANTHER" id="PTHR11680">
    <property type="entry name" value="SERINE HYDROXYMETHYLTRANSFERASE"/>
    <property type="match status" value="1"/>
</dbReference>
<dbReference type="PANTHER" id="PTHR11680:SF35">
    <property type="entry name" value="SERINE HYDROXYMETHYLTRANSFERASE 1"/>
    <property type="match status" value="1"/>
</dbReference>
<dbReference type="Pfam" id="PF00464">
    <property type="entry name" value="SHMT"/>
    <property type="match status" value="1"/>
</dbReference>
<dbReference type="PIRSF" id="PIRSF000412">
    <property type="entry name" value="SHMT"/>
    <property type="match status" value="1"/>
</dbReference>
<dbReference type="SUPFAM" id="SSF53383">
    <property type="entry name" value="PLP-dependent transferases"/>
    <property type="match status" value="1"/>
</dbReference>
<dbReference type="PROSITE" id="PS00096">
    <property type="entry name" value="SHMT"/>
    <property type="match status" value="1"/>
</dbReference>
<accession>A5FEF4</accession>
<name>GLYA_FLAJ1</name>
<organism>
    <name type="scientific">Flavobacterium johnsoniae (strain ATCC 17061 / DSM 2064 / JCM 8514 / BCRC 14874 / CCUG 350202 / NBRC 14942 / NCIMB 11054 / UW101)</name>
    <name type="common">Cytophaga johnsonae</name>
    <dbReference type="NCBI Taxonomy" id="376686"/>
    <lineage>
        <taxon>Bacteria</taxon>
        <taxon>Pseudomonadati</taxon>
        <taxon>Bacteroidota</taxon>
        <taxon>Flavobacteriia</taxon>
        <taxon>Flavobacteriales</taxon>
        <taxon>Flavobacteriaceae</taxon>
        <taxon>Flavobacterium</taxon>
    </lineage>
</organism>